<accession>Q57E90</accession>
<feature type="chain" id="PRO_0000322563" description="GTP pyrophosphokinase rsh">
    <location>
        <begin position="1"/>
        <end position="750"/>
    </location>
</feature>
<feature type="domain" description="HD" evidence="2">
    <location>
        <begin position="45"/>
        <end position="144"/>
    </location>
</feature>
<feature type="domain" description="TGS" evidence="3">
    <location>
        <begin position="390"/>
        <end position="451"/>
    </location>
</feature>
<feature type="domain" description="ACT" evidence="1">
    <location>
        <begin position="676"/>
        <end position="750"/>
    </location>
</feature>
<feature type="region of interest" description="Disordered" evidence="4">
    <location>
        <begin position="587"/>
        <end position="613"/>
    </location>
</feature>
<proteinExistence type="evidence at protein level"/>
<sequence>MMRQYELVERVQRYKPDVNEALLNKAYVYAMQKHGSQKRASGDPYFSHPLEVAAILTDMHLDEATIAIALLHDTIEDTTATRQEIDQLFGPEIGKLVEGLTKLKKLDLVSKKAVQAENLRKLLLAISEDVRVLLVKLADRLHNMRTLGVMREDKRLRIAEETMDIYAPLAGRMGMQDMREELEELAFRYINPDAWRAVTDRLAELLEKNRGLLQKIETDLSEIFEKNGIKASVKSRQKKPWSVFRKMETKGLSFEQLSDIFGFRVMVDTVQDCYRALGLIHTTWSMVPGRFKDYISTPKQNDYRSIHTTIIGPSRQRIELQIRTREMDEIAEFGVAAHSIYKDRGSANNPHKISTETNAYAWLRQTIEQLSEGDNPEEFLEHTKLELFQDQVFCFTPKGRLIALPRGATPIDFAYAVHTDIGDSCVGAKVNGRIMPLMTELKNGDEVDIIRSKAQVPPAAWESLVATGKARAAIRRATRSAVRKQYSGLGMRILERAFERAGKPFSKDILKPGLPRLARKDVEDVLAAVGRGELPSADVVKAVYPDYQDTRVTTQNNPAKAGEKGWFNIQNAAGMIFKVPEGGEGAAAKVDPAATTPKPGKRALPIRGTNPDLPVRFAPEGAVPGDRIVGILQPGAGITIYPIQSPALTAYDDQPERWIDVRWDIDDQMSERFPARISVSAINSPGSLAEIAQIAAANDANIHNLSMARTAPDFTEMIIDVEVWDLKHLNRIISQLKESASVSSAKRVNG</sequence>
<protein>
    <recommendedName>
        <fullName>GTP pyrophosphokinase rsh</fullName>
        <ecNumber>2.7.6.5</ecNumber>
    </recommendedName>
    <alternativeName>
        <fullName>(p)ppGpp synthase</fullName>
    </alternativeName>
    <alternativeName>
        <fullName>ATP:GTP 3'-pyrophosphotransferase</fullName>
    </alternativeName>
</protein>
<organism>
    <name type="scientific">Brucella abortus biovar 1 (strain 9-941)</name>
    <dbReference type="NCBI Taxonomy" id="262698"/>
    <lineage>
        <taxon>Bacteria</taxon>
        <taxon>Pseudomonadati</taxon>
        <taxon>Pseudomonadota</taxon>
        <taxon>Alphaproteobacteria</taxon>
        <taxon>Hyphomicrobiales</taxon>
        <taxon>Brucellaceae</taxon>
        <taxon>Brucella/Ochrobactrum group</taxon>
        <taxon>Brucella</taxon>
    </lineage>
</organism>
<gene>
    <name type="primary">rsh</name>
    <name type="synonym">spoT</name>
    <name type="ordered locus">BruAb1_0669</name>
</gene>
<dbReference type="EC" id="2.7.6.5"/>
<dbReference type="EMBL" id="AE017223">
    <property type="protein sequence ID" value="AAX74044.1"/>
    <property type="molecule type" value="Genomic_DNA"/>
</dbReference>
<dbReference type="RefSeq" id="WP_002963796.1">
    <property type="nucleotide sequence ID" value="NC_006932.1"/>
</dbReference>
<dbReference type="SMR" id="Q57E90"/>
<dbReference type="EnsemblBacteria" id="AAX74044">
    <property type="protein sequence ID" value="AAX74044"/>
    <property type="gene ID" value="BruAb1_0669"/>
</dbReference>
<dbReference type="KEGG" id="bmb:BruAb1_0669"/>
<dbReference type="HOGENOM" id="CLU_012300_3_0_5"/>
<dbReference type="Proteomes" id="UP000000540">
    <property type="component" value="Chromosome I"/>
</dbReference>
<dbReference type="GO" id="GO:0005886">
    <property type="term" value="C:plasma membrane"/>
    <property type="evidence" value="ECO:0007669"/>
    <property type="project" value="TreeGrafter"/>
</dbReference>
<dbReference type="GO" id="GO:0005524">
    <property type="term" value="F:ATP binding"/>
    <property type="evidence" value="ECO:0007669"/>
    <property type="project" value="UniProtKB-KW"/>
</dbReference>
<dbReference type="GO" id="GO:0005525">
    <property type="term" value="F:GTP binding"/>
    <property type="evidence" value="ECO:0007669"/>
    <property type="project" value="UniProtKB-KW"/>
</dbReference>
<dbReference type="GO" id="GO:0008728">
    <property type="term" value="F:GTP diphosphokinase activity"/>
    <property type="evidence" value="ECO:0007669"/>
    <property type="project" value="UniProtKB-EC"/>
</dbReference>
<dbReference type="GO" id="GO:0008893">
    <property type="term" value="F:guanosine-3',5'-bis(diphosphate) 3'-diphosphatase activity"/>
    <property type="evidence" value="ECO:0007669"/>
    <property type="project" value="TreeGrafter"/>
</dbReference>
<dbReference type="GO" id="GO:0016301">
    <property type="term" value="F:kinase activity"/>
    <property type="evidence" value="ECO:0007669"/>
    <property type="project" value="UniProtKB-KW"/>
</dbReference>
<dbReference type="GO" id="GO:0015969">
    <property type="term" value="P:guanosine tetraphosphate metabolic process"/>
    <property type="evidence" value="ECO:0007669"/>
    <property type="project" value="InterPro"/>
</dbReference>
<dbReference type="GO" id="GO:0042594">
    <property type="term" value="P:response to starvation"/>
    <property type="evidence" value="ECO:0007669"/>
    <property type="project" value="TreeGrafter"/>
</dbReference>
<dbReference type="CDD" id="cd04876">
    <property type="entry name" value="ACT_RelA-SpoT"/>
    <property type="match status" value="1"/>
</dbReference>
<dbReference type="CDD" id="cd00077">
    <property type="entry name" value="HDc"/>
    <property type="match status" value="1"/>
</dbReference>
<dbReference type="CDD" id="cd05399">
    <property type="entry name" value="NT_Rel-Spo_like"/>
    <property type="match status" value="1"/>
</dbReference>
<dbReference type="CDD" id="cd01668">
    <property type="entry name" value="TGS_RSH"/>
    <property type="match status" value="1"/>
</dbReference>
<dbReference type="FunFam" id="3.10.20.30:FF:000002">
    <property type="entry name" value="GTP pyrophosphokinase (RelA/SpoT)"/>
    <property type="match status" value="1"/>
</dbReference>
<dbReference type="FunFam" id="1.10.3210.10:FF:000001">
    <property type="entry name" value="GTP pyrophosphokinase RelA"/>
    <property type="match status" value="1"/>
</dbReference>
<dbReference type="FunFam" id="3.30.460.10:FF:000001">
    <property type="entry name" value="GTP pyrophosphokinase RelA"/>
    <property type="match status" value="1"/>
</dbReference>
<dbReference type="Gene3D" id="3.10.20.30">
    <property type="match status" value="1"/>
</dbReference>
<dbReference type="Gene3D" id="3.30.70.260">
    <property type="match status" value="1"/>
</dbReference>
<dbReference type="Gene3D" id="3.30.460.10">
    <property type="entry name" value="Beta Polymerase, domain 2"/>
    <property type="match status" value="1"/>
</dbReference>
<dbReference type="Gene3D" id="1.10.3210.10">
    <property type="entry name" value="Hypothetical protein af1432"/>
    <property type="match status" value="1"/>
</dbReference>
<dbReference type="InterPro" id="IPR045865">
    <property type="entry name" value="ACT-like_dom_sf"/>
</dbReference>
<dbReference type="InterPro" id="IPR002912">
    <property type="entry name" value="ACT_dom"/>
</dbReference>
<dbReference type="InterPro" id="IPR012675">
    <property type="entry name" value="Beta-grasp_dom_sf"/>
</dbReference>
<dbReference type="InterPro" id="IPR003607">
    <property type="entry name" value="HD/PDEase_dom"/>
</dbReference>
<dbReference type="InterPro" id="IPR006674">
    <property type="entry name" value="HD_domain"/>
</dbReference>
<dbReference type="InterPro" id="IPR043519">
    <property type="entry name" value="NT_sf"/>
</dbReference>
<dbReference type="InterPro" id="IPR004811">
    <property type="entry name" value="RelA/Spo_fam"/>
</dbReference>
<dbReference type="InterPro" id="IPR045600">
    <property type="entry name" value="RelA/SpoT_AH_RIS"/>
</dbReference>
<dbReference type="InterPro" id="IPR007685">
    <property type="entry name" value="RelA_SpoT"/>
</dbReference>
<dbReference type="InterPro" id="IPR004095">
    <property type="entry name" value="TGS"/>
</dbReference>
<dbReference type="InterPro" id="IPR012676">
    <property type="entry name" value="TGS-like"/>
</dbReference>
<dbReference type="InterPro" id="IPR033655">
    <property type="entry name" value="TGS_RelA/SpoT"/>
</dbReference>
<dbReference type="NCBIfam" id="TIGR00691">
    <property type="entry name" value="spoT_relA"/>
    <property type="match status" value="1"/>
</dbReference>
<dbReference type="PANTHER" id="PTHR21262:SF36">
    <property type="entry name" value="BIFUNCTIONAL (P)PPGPP SYNTHASE_HYDROLASE SPOT"/>
    <property type="match status" value="1"/>
</dbReference>
<dbReference type="PANTHER" id="PTHR21262">
    <property type="entry name" value="GUANOSINE-3',5'-BIS DIPHOSPHATE 3'-PYROPHOSPHOHYDROLASE"/>
    <property type="match status" value="1"/>
</dbReference>
<dbReference type="Pfam" id="PF13291">
    <property type="entry name" value="ACT_4"/>
    <property type="match status" value="1"/>
</dbReference>
<dbReference type="Pfam" id="PF13328">
    <property type="entry name" value="HD_4"/>
    <property type="match status" value="1"/>
</dbReference>
<dbReference type="Pfam" id="PF19296">
    <property type="entry name" value="RelA_AH_RIS"/>
    <property type="match status" value="1"/>
</dbReference>
<dbReference type="Pfam" id="PF04607">
    <property type="entry name" value="RelA_SpoT"/>
    <property type="match status" value="1"/>
</dbReference>
<dbReference type="Pfam" id="PF02824">
    <property type="entry name" value="TGS"/>
    <property type="match status" value="1"/>
</dbReference>
<dbReference type="SMART" id="SM00471">
    <property type="entry name" value="HDc"/>
    <property type="match status" value="1"/>
</dbReference>
<dbReference type="SMART" id="SM00954">
    <property type="entry name" value="RelA_SpoT"/>
    <property type="match status" value="1"/>
</dbReference>
<dbReference type="SUPFAM" id="SSF55021">
    <property type="entry name" value="ACT-like"/>
    <property type="match status" value="1"/>
</dbReference>
<dbReference type="SUPFAM" id="SSF109604">
    <property type="entry name" value="HD-domain/PDEase-like"/>
    <property type="match status" value="1"/>
</dbReference>
<dbReference type="SUPFAM" id="SSF81301">
    <property type="entry name" value="Nucleotidyltransferase"/>
    <property type="match status" value="1"/>
</dbReference>
<dbReference type="SUPFAM" id="SSF81271">
    <property type="entry name" value="TGS-like"/>
    <property type="match status" value="1"/>
</dbReference>
<dbReference type="PROSITE" id="PS51671">
    <property type="entry name" value="ACT"/>
    <property type="match status" value="1"/>
</dbReference>
<dbReference type="PROSITE" id="PS51831">
    <property type="entry name" value="HD"/>
    <property type="match status" value="1"/>
</dbReference>
<dbReference type="PROSITE" id="PS51880">
    <property type="entry name" value="TGS"/>
    <property type="match status" value="1"/>
</dbReference>
<reference key="1">
    <citation type="journal article" date="2005" name="J. Bacteriol.">
        <title>Completion of the genome sequence of Brucella abortus and comparison to the highly similar genomes of Brucella melitensis and Brucella suis.</title>
        <authorList>
            <person name="Halling S.M."/>
            <person name="Peterson-Burch B.D."/>
            <person name="Bricker B.J."/>
            <person name="Zuerner R.L."/>
            <person name="Qing Z."/>
            <person name="Li L.-L."/>
            <person name="Kapur V."/>
            <person name="Alt D.P."/>
            <person name="Olsen S.C."/>
        </authorList>
    </citation>
    <scope>NUCLEOTIDE SEQUENCE [LARGE SCALE GENOMIC DNA]</scope>
    <source>
        <strain>9-941</strain>
    </source>
</reference>
<reference key="2">
    <citation type="journal article" date="2005" name="Microbiology">
        <title>Roles of Brucella abortus SpoT in morphological differentiation and intramacrophagic replication.</title>
        <authorList>
            <person name="Kim S."/>
            <person name="Watanabe K."/>
            <person name="Suzuki H."/>
            <person name="Watarai M."/>
        </authorList>
    </citation>
    <scope>FUNCTION IN ADAPTATION TO INTRACELLULAR REPLICATION</scope>
    <scope>DISRUPTION PHENOTYPE</scope>
    <source>
        <strain>544 / Biovar 1</strain>
    </source>
</reference>
<name>RSH_BRUAB</name>
<comment type="function">
    <text evidence="5">Functions as a (p)ppGpp synthase. In eubacteria ppGpp (guanosine 3'-diphosphate 5'-diphosphate) is a mediator of the stringent response that coordinates a variety of cellular activities in response to changes in nutritional abundance. Plays a role in adaptation of Brucella to its intracellular host environment.</text>
</comment>
<comment type="catalytic activity">
    <reaction>
        <text>GTP + ATP = guanosine 3'-diphosphate 5'-triphosphate + AMP</text>
        <dbReference type="Rhea" id="RHEA:22088"/>
        <dbReference type="ChEBI" id="CHEBI:30616"/>
        <dbReference type="ChEBI" id="CHEBI:37565"/>
        <dbReference type="ChEBI" id="CHEBI:142410"/>
        <dbReference type="ChEBI" id="CHEBI:456215"/>
        <dbReference type="EC" id="2.7.6.5"/>
    </reaction>
</comment>
<comment type="disruption phenotype">
    <text evidence="5">Cells show morphological abnormalities such as branching and swelling forms. It does not grow in RPMI-1640 with or without 10% FBS. It shows decreased growth until 48 hours in RPMI-1640 and stationary growth until 48 hours in RPMI-1640 with 10% FBS. It has the same ability as the wild-type to internalize at 0 minute but a lower rate of internalization at 30 minutes. It shows a lower rate of intracellular replication within macrophages than the wild-type. Its adherence is four times higher than that of the wild-type. It shows lower MICs than the wild-type for several antimicrobial agents such as penicillin G, methicillin, erythromycin and doxycycline. At ten days post infection the number of viable bacteria (disruption mutant) is markedly reduced compared to the wild-type.</text>
</comment>
<comment type="similarity">
    <text evidence="6">Belongs to the RelA/SpoT family.</text>
</comment>
<evidence type="ECO:0000255" key="1">
    <source>
        <dbReference type="PROSITE-ProRule" id="PRU01007"/>
    </source>
</evidence>
<evidence type="ECO:0000255" key="2">
    <source>
        <dbReference type="PROSITE-ProRule" id="PRU01175"/>
    </source>
</evidence>
<evidence type="ECO:0000255" key="3">
    <source>
        <dbReference type="PROSITE-ProRule" id="PRU01228"/>
    </source>
</evidence>
<evidence type="ECO:0000256" key="4">
    <source>
        <dbReference type="SAM" id="MobiDB-lite"/>
    </source>
</evidence>
<evidence type="ECO:0000269" key="5">
    <source>
    </source>
</evidence>
<evidence type="ECO:0000305" key="6"/>
<keyword id="KW-0067">ATP-binding</keyword>
<keyword id="KW-0342">GTP-binding</keyword>
<keyword id="KW-0418">Kinase</keyword>
<keyword id="KW-0547">Nucleotide-binding</keyword>
<keyword id="KW-0808">Transferase</keyword>